<keyword id="KW-0067">ATP-binding</keyword>
<keyword id="KW-0133">Cell shape</keyword>
<keyword id="KW-0961">Cell wall biogenesis/degradation</keyword>
<keyword id="KW-0963">Cytoplasm</keyword>
<keyword id="KW-0436">Ligase</keyword>
<keyword id="KW-0460">Magnesium</keyword>
<keyword id="KW-0464">Manganese</keyword>
<keyword id="KW-0479">Metal-binding</keyword>
<keyword id="KW-0547">Nucleotide-binding</keyword>
<keyword id="KW-0573">Peptidoglycan synthesis</keyword>
<sequence>MKLRVAVIYGGRTGEHEVSVRSAKSILAGLDCEKYETIEYFIDQNGKWSPGPILPEPGAHANIDVVFPVLHGTFGEDGTVQGLLELADLPYVGAGVLGSAVSMDKEMMKRVCKERMLPIVDYVTVTRQTPSIVDACRRLPFPMFVKPANLGSSVGISKAHDEQELEAAFSLAKQYDRKIIVERGIEGRELECSVLGNEAPMASLPCEILPSREFYDYEDKYLLDMARTQVPADLPGERTDEIRRLAVECYRAVECEGMARVDFFLEHGTNRLYINEINTIPGFTSISMYPKMWEHSGIPFCTLLDQLIEFALDRHRQKQVTRFAR</sequence>
<feature type="chain" id="PRO_1000057330" description="D-alanine--D-alanine ligase">
    <location>
        <begin position="1"/>
        <end position="325"/>
    </location>
</feature>
<feature type="domain" description="ATP-grasp" evidence="2">
    <location>
        <begin position="109"/>
        <end position="309"/>
    </location>
</feature>
<feature type="binding site" evidence="2">
    <location>
        <begin position="136"/>
        <end position="191"/>
    </location>
    <ligand>
        <name>ATP</name>
        <dbReference type="ChEBI" id="CHEBI:30616"/>
    </ligand>
</feature>
<feature type="binding site" evidence="2">
    <location>
        <position position="262"/>
    </location>
    <ligand>
        <name>Mg(2+)</name>
        <dbReference type="ChEBI" id="CHEBI:18420"/>
        <label>1</label>
    </ligand>
</feature>
<feature type="binding site" evidence="2">
    <location>
        <position position="276"/>
    </location>
    <ligand>
        <name>Mg(2+)</name>
        <dbReference type="ChEBI" id="CHEBI:18420"/>
        <label>1</label>
    </ligand>
</feature>
<feature type="binding site" evidence="2">
    <location>
        <position position="276"/>
    </location>
    <ligand>
        <name>Mg(2+)</name>
        <dbReference type="ChEBI" id="CHEBI:18420"/>
        <label>2</label>
    </ligand>
</feature>
<feature type="binding site" evidence="2">
    <location>
        <position position="278"/>
    </location>
    <ligand>
        <name>Mg(2+)</name>
        <dbReference type="ChEBI" id="CHEBI:18420"/>
        <label>2</label>
    </ligand>
</feature>
<protein>
    <recommendedName>
        <fullName evidence="2">D-alanine--D-alanine ligase</fullName>
        <ecNumber evidence="2">6.3.2.4</ecNumber>
    </recommendedName>
    <alternativeName>
        <fullName evidence="2">D-Ala-D-Ala ligase</fullName>
    </alternativeName>
    <alternativeName>
        <fullName evidence="2">D-alanylalanine synthetase</fullName>
    </alternativeName>
</protein>
<comment type="function">
    <text evidence="2">Cell wall formation.</text>
</comment>
<comment type="catalytic activity">
    <reaction evidence="2">
        <text>2 D-alanine + ATP = D-alanyl-D-alanine + ADP + phosphate + H(+)</text>
        <dbReference type="Rhea" id="RHEA:11224"/>
        <dbReference type="ChEBI" id="CHEBI:15378"/>
        <dbReference type="ChEBI" id="CHEBI:30616"/>
        <dbReference type="ChEBI" id="CHEBI:43474"/>
        <dbReference type="ChEBI" id="CHEBI:57416"/>
        <dbReference type="ChEBI" id="CHEBI:57822"/>
        <dbReference type="ChEBI" id="CHEBI:456216"/>
        <dbReference type="EC" id="6.3.2.4"/>
    </reaction>
</comment>
<comment type="cofactor">
    <cofactor evidence="1">
        <name>Mg(2+)</name>
        <dbReference type="ChEBI" id="CHEBI:18420"/>
    </cofactor>
    <cofactor evidence="1">
        <name>Mn(2+)</name>
        <dbReference type="ChEBI" id="CHEBI:29035"/>
    </cofactor>
    <text evidence="1">Binds 2 magnesium or manganese ions per subunit.</text>
</comment>
<comment type="pathway">
    <text evidence="2">Cell wall biogenesis; peptidoglycan biosynthesis.</text>
</comment>
<comment type="subcellular location">
    <subcellularLocation>
        <location evidence="2">Cytoplasm</location>
    </subcellularLocation>
</comment>
<comment type="similarity">
    <text evidence="2">Belongs to the D-alanine--D-alanine ligase family.</text>
</comment>
<name>DDL_SOLUE</name>
<reference key="1">
    <citation type="journal article" date="2009" name="Appl. Environ. Microbiol.">
        <title>Three genomes from the phylum Acidobacteria provide insight into the lifestyles of these microorganisms in soils.</title>
        <authorList>
            <person name="Ward N.L."/>
            <person name="Challacombe J.F."/>
            <person name="Janssen P.H."/>
            <person name="Henrissat B."/>
            <person name="Coutinho P.M."/>
            <person name="Wu M."/>
            <person name="Xie G."/>
            <person name="Haft D.H."/>
            <person name="Sait M."/>
            <person name="Badger J."/>
            <person name="Barabote R.D."/>
            <person name="Bradley B."/>
            <person name="Brettin T.S."/>
            <person name="Brinkac L.M."/>
            <person name="Bruce D."/>
            <person name="Creasy T."/>
            <person name="Daugherty S.C."/>
            <person name="Davidsen T.M."/>
            <person name="DeBoy R.T."/>
            <person name="Detter J.C."/>
            <person name="Dodson R.J."/>
            <person name="Durkin A.S."/>
            <person name="Ganapathy A."/>
            <person name="Gwinn-Giglio M."/>
            <person name="Han C.S."/>
            <person name="Khouri H."/>
            <person name="Kiss H."/>
            <person name="Kothari S.P."/>
            <person name="Madupu R."/>
            <person name="Nelson K.E."/>
            <person name="Nelson W.C."/>
            <person name="Paulsen I."/>
            <person name="Penn K."/>
            <person name="Ren Q."/>
            <person name="Rosovitz M.J."/>
            <person name="Selengut J.D."/>
            <person name="Shrivastava S."/>
            <person name="Sullivan S.A."/>
            <person name="Tapia R."/>
            <person name="Thompson L.S."/>
            <person name="Watkins K.L."/>
            <person name="Yang Q."/>
            <person name="Yu C."/>
            <person name="Zafar N."/>
            <person name="Zhou L."/>
            <person name="Kuske C.R."/>
        </authorList>
    </citation>
    <scope>NUCLEOTIDE SEQUENCE [LARGE SCALE GENOMIC DNA]</scope>
    <source>
        <strain>Ellin6076</strain>
    </source>
</reference>
<proteinExistence type="inferred from homology"/>
<gene>
    <name evidence="2" type="primary">ddl</name>
    <name type="ordered locus">Acid_2799</name>
</gene>
<organism>
    <name type="scientific">Solibacter usitatus (strain Ellin6076)</name>
    <dbReference type="NCBI Taxonomy" id="234267"/>
    <lineage>
        <taxon>Bacteria</taxon>
        <taxon>Pseudomonadati</taxon>
        <taxon>Acidobacteriota</taxon>
        <taxon>Terriglobia</taxon>
        <taxon>Bryobacterales</taxon>
        <taxon>Solibacteraceae</taxon>
        <taxon>Candidatus Solibacter</taxon>
    </lineage>
</organism>
<accession>Q023Q5</accession>
<dbReference type="EC" id="6.3.2.4" evidence="2"/>
<dbReference type="EMBL" id="CP000473">
    <property type="protein sequence ID" value="ABJ83785.1"/>
    <property type="molecule type" value="Genomic_DNA"/>
</dbReference>
<dbReference type="SMR" id="Q023Q5"/>
<dbReference type="FunCoup" id="Q023Q5">
    <property type="interactions" value="169"/>
</dbReference>
<dbReference type="STRING" id="234267.Acid_2799"/>
<dbReference type="KEGG" id="sus:Acid_2799"/>
<dbReference type="eggNOG" id="COG1181">
    <property type="taxonomic scope" value="Bacteria"/>
</dbReference>
<dbReference type="HOGENOM" id="CLU_039268_0_0_0"/>
<dbReference type="InParanoid" id="Q023Q5"/>
<dbReference type="OrthoDB" id="9813261at2"/>
<dbReference type="UniPathway" id="UPA00219"/>
<dbReference type="GO" id="GO:0005829">
    <property type="term" value="C:cytosol"/>
    <property type="evidence" value="ECO:0007669"/>
    <property type="project" value="TreeGrafter"/>
</dbReference>
<dbReference type="GO" id="GO:0005524">
    <property type="term" value="F:ATP binding"/>
    <property type="evidence" value="ECO:0007669"/>
    <property type="project" value="UniProtKB-KW"/>
</dbReference>
<dbReference type="GO" id="GO:0008716">
    <property type="term" value="F:D-alanine-D-alanine ligase activity"/>
    <property type="evidence" value="ECO:0007669"/>
    <property type="project" value="UniProtKB-UniRule"/>
</dbReference>
<dbReference type="GO" id="GO:0046872">
    <property type="term" value="F:metal ion binding"/>
    <property type="evidence" value="ECO:0007669"/>
    <property type="project" value="UniProtKB-KW"/>
</dbReference>
<dbReference type="GO" id="GO:0071555">
    <property type="term" value="P:cell wall organization"/>
    <property type="evidence" value="ECO:0007669"/>
    <property type="project" value="UniProtKB-KW"/>
</dbReference>
<dbReference type="GO" id="GO:0009252">
    <property type="term" value="P:peptidoglycan biosynthetic process"/>
    <property type="evidence" value="ECO:0007669"/>
    <property type="project" value="UniProtKB-UniRule"/>
</dbReference>
<dbReference type="GO" id="GO:0008360">
    <property type="term" value="P:regulation of cell shape"/>
    <property type="evidence" value="ECO:0007669"/>
    <property type="project" value="UniProtKB-KW"/>
</dbReference>
<dbReference type="FunFam" id="3.30.1490.20:FF:000007">
    <property type="entry name" value="D-alanine--D-alanine ligase"/>
    <property type="match status" value="1"/>
</dbReference>
<dbReference type="FunFam" id="3.30.470.20:FF:000008">
    <property type="entry name" value="D-alanine--D-alanine ligase"/>
    <property type="match status" value="1"/>
</dbReference>
<dbReference type="Gene3D" id="3.40.50.20">
    <property type="match status" value="1"/>
</dbReference>
<dbReference type="Gene3D" id="3.30.1490.20">
    <property type="entry name" value="ATP-grasp fold, A domain"/>
    <property type="match status" value="1"/>
</dbReference>
<dbReference type="Gene3D" id="3.30.470.20">
    <property type="entry name" value="ATP-grasp fold, B domain"/>
    <property type="match status" value="1"/>
</dbReference>
<dbReference type="HAMAP" id="MF_00047">
    <property type="entry name" value="Dala_Dala_lig"/>
    <property type="match status" value="1"/>
</dbReference>
<dbReference type="InterPro" id="IPR011761">
    <property type="entry name" value="ATP-grasp"/>
</dbReference>
<dbReference type="InterPro" id="IPR013815">
    <property type="entry name" value="ATP_grasp_subdomain_1"/>
</dbReference>
<dbReference type="InterPro" id="IPR000291">
    <property type="entry name" value="D-Ala_lig_Van_CS"/>
</dbReference>
<dbReference type="InterPro" id="IPR005905">
    <property type="entry name" value="D_ala_D_ala"/>
</dbReference>
<dbReference type="InterPro" id="IPR011095">
    <property type="entry name" value="Dala_Dala_lig_C"/>
</dbReference>
<dbReference type="InterPro" id="IPR011127">
    <property type="entry name" value="Dala_Dala_lig_N"/>
</dbReference>
<dbReference type="InterPro" id="IPR016185">
    <property type="entry name" value="PreATP-grasp_dom_sf"/>
</dbReference>
<dbReference type="NCBIfam" id="TIGR01205">
    <property type="entry name" value="D_ala_D_alaTIGR"/>
    <property type="match status" value="1"/>
</dbReference>
<dbReference type="NCBIfam" id="NF002378">
    <property type="entry name" value="PRK01372.1"/>
    <property type="match status" value="1"/>
</dbReference>
<dbReference type="NCBIfam" id="NF002528">
    <property type="entry name" value="PRK01966.1-4"/>
    <property type="match status" value="1"/>
</dbReference>
<dbReference type="PANTHER" id="PTHR23132">
    <property type="entry name" value="D-ALANINE--D-ALANINE LIGASE"/>
    <property type="match status" value="1"/>
</dbReference>
<dbReference type="PANTHER" id="PTHR23132:SF25">
    <property type="entry name" value="D-ALANINE--D-ALANINE LIGASE A"/>
    <property type="match status" value="1"/>
</dbReference>
<dbReference type="Pfam" id="PF07478">
    <property type="entry name" value="Dala_Dala_lig_C"/>
    <property type="match status" value="1"/>
</dbReference>
<dbReference type="Pfam" id="PF01820">
    <property type="entry name" value="Dala_Dala_lig_N"/>
    <property type="match status" value="2"/>
</dbReference>
<dbReference type="PIRSF" id="PIRSF039102">
    <property type="entry name" value="Ddl/VanB"/>
    <property type="match status" value="1"/>
</dbReference>
<dbReference type="SUPFAM" id="SSF56059">
    <property type="entry name" value="Glutathione synthetase ATP-binding domain-like"/>
    <property type="match status" value="1"/>
</dbReference>
<dbReference type="SUPFAM" id="SSF52440">
    <property type="entry name" value="PreATP-grasp domain"/>
    <property type="match status" value="1"/>
</dbReference>
<dbReference type="PROSITE" id="PS50975">
    <property type="entry name" value="ATP_GRASP"/>
    <property type="match status" value="1"/>
</dbReference>
<dbReference type="PROSITE" id="PS00843">
    <property type="entry name" value="DALA_DALA_LIGASE_1"/>
    <property type="match status" value="1"/>
</dbReference>
<dbReference type="PROSITE" id="PS00844">
    <property type="entry name" value="DALA_DALA_LIGASE_2"/>
    <property type="match status" value="1"/>
</dbReference>
<evidence type="ECO:0000250" key="1"/>
<evidence type="ECO:0000255" key="2">
    <source>
        <dbReference type="HAMAP-Rule" id="MF_00047"/>
    </source>
</evidence>